<dbReference type="EMBL" id="CP000124">
    <property type="protein sequence ID" value="ABA49500.1"/>
    <property type="molecule type" value="Genomic_DNA"/>
</dbReference>
<dbReference type="RefSeq" id="WP_004195832.1">
    <property type="nucleotide sequence ID" value="NC_007434.1"/>
</dbReference>
<dbReference type="SMR" id="Q3JXW0"/>
<dbReference type="EnsemblBacteria" id="ABA49500">
    <property type="protein sequence ID" value="ABA49500"/>
    <property type="gene ID" value="BURPS1710b_0177"/>
</dbReference>
<dbReference type="KEGG" id="bpm:BURPS1710b_0177"/>
<dbReference type="HOGENOM" id="CLU_084338_2_0_4"/>
<dbReference type="Proteomes" id="UP000002700">
    <property type="component" value="Chromosome I"/>
</dbReference>
<dbReference type="GO" id="GO:0005886">
    <property type="term" value="C:plasma membrane"/>
    <property type="evidence" value="ECO:0007669"/>
    <property type="project" value="UniProtKB-SubCell"/>
</dbReference>
<dbReference type="GO" id="GO:0045259">
    <property type="term" value="C:proton-transporting ATP synthase complex"/>
    <property type="evidence" value="ECO:0007669"/>
    <property type="project" value="UniProtKB-KW"/>
</dbReference>
<dbReference type="GO" id="GO:0005524">
    <property type="term" value="F:ATP binding"/>
    <property type="evidence" value="ECO:0007669"/>
    <property type="project" value="UniProtKB-UniRule"/>
</dbReference>
<dbReference type="GO" id="GO:0046933">
    <property type="term" value="F:proton-transporting ATP synthase activity, rotational mechanism"/>
    <property type="evidence" value="ECO:0007669"/>
    <property type="project" value="UniProtKB-UniRule"/>
</dbReference>
<dbReference type="CDD" id="cd12152">
    <property type="entry name" value="F1-ATPase_delta"/>
    <property type="match status" value="1"/>
</dbReference>
<dbReference type="FunFam" id="2.60.15.10:FF:000001">
    <property type="entry name" value="ATP synthase epsilon chain"/>
    <property type="match status" value="1"/>
</dbReference>
<dbReference type="Gene3D" id="1.20.5.440">
    <property type="entry name" value="ATP synthase delta/epsilon subunit, C-terminal domain"/>
    <property type="match status" value="1"/>
</dbReference>
<dbReference type="Gene3D" id="2.60.15.10">
    <property type="entry name" value="F0F1 ATP synthase delta/epsilon subunit, N-terminal"/>
    <property type="match status" value="1"/>
</dbReference>
<dbReference type="HAMAP" id="MF_00530">
    <property type="entry name" value="ATP_synth_epsil_bac"/>
    <property type="match status" value="1"/>
</dbReference>
<dbReference type="InterPro" id="IPR036794">
    <property type="entry name" value="ATP_F1_dsu/esu_C_sf"/>
</dbReference>
<dbReference type="InterPro" id="IPR001469">
    <property type="entry name" value="ATP_synth_F1_dsu/esu"/>
</dbReference>
<dbReference type="InterPro" id="IPR020546">
    <property type="entry name" value="ATP_synth_F1_dsu/esu_N"/>
</dbReference>
<dbReference type="InterPro" id="IPR020547">
    <property type="entry name" value="ATP_synth_F1_esu_C"/>
</dbReference>
<dbReference type="InterPro" id="IPR036771">
    <property type="entry name" value="ATPsynth_dsu/esu_N"/>
</dbReference>
<dbReference type="NCBIfam" id="TIGR01216">
    <property type="entry name" value="ATP_synt_epsi"/>
    <property type="match status" value="1"/>
</dbReference>
<dbReference type="NCBIfam" id="NF001847">
    <property type="entry name" value="PRK00571.1-4"/>
    <property type="match status" value="1"/>
</dbReference>
<dbReference type="PANTHER" id="PTHR13822">
    <property type="entry name" value="ATP SYNTHASE DELTA/EPSILON CHAIN"/>
    <property type="match status" value="1"/>
</dbReference>
<dbReference type="PANTHER" id="PTHR13822:SF10">
    <property type="entry name" value="ATP SYNTHASE EPSILON CHAIN, CHLOROPLASTIC"/>
    <property type="match status" value="1"/>
</dbReference>
<dbReference type="Pfam" id="PF00401">
    <property type="entry name" value="ATP-synt_DE"/>
    <property type="match status" value="1"/>
</dbReference>
<dbReference type="Pfam" id="PF02823">
    <property type="entry name" value="ATP-synt_DE_N"/>
    <property type="match status" value="1"/>
</dbReference>
<dbReference type="SUPFAM" id="SSF46604">
    <property type="entry name" value="Epsilon subunit of F1F0-ATP synthase C-terminal domain"/>
    <property type="match status" value="1"/>
</dbReference>
<dbReference type="SUPFAM" id="SSF51344">
    <property type="entry name" value="Epsilon subunit of F1F0-ATP synthase N-terminal domain"/>
    <property type="match status" value="1"/>
</dbReference>
<sequence>MATIKVDVVSAEEQIFSGQAKFVALPGEAGELGILPGHTPLITRIRPGAVRIESESGDEEFVFVAGGILEVQPGAVTVLADTAIRGKDLDAAKAEEARKRAEETLQNAKSDIDLAKAQSELATAMAQLEAIQRLAKIRGKH</sequence>
<evidence type="ECO:0000255" key="1">
    <source>
        <dbReference type="HAMAP-Rule" id="MF_00530"/>
    </source>
</evidence>
<keyword id="KW-0066">ATP synthesis</keyword>
<keyword id="KW-0997">Cell inner membrane</keyword>
<keyword id="KW-1003">Cell membrane</keyword>
<keyword id="KW-0139">CF(1)</keyword>
<keyword id="KW-0375">Hydrogen ion transport</keyword>
<keyword id="KW-0406">Ion transport</keyword>
<keyword id="KW-0472">Membrane</keyword>
<keyword id="KW-0813">Transport</keyword>
<organism>
    <name type="scientific">Burkholderia pseudomallei (strain 1710b)</name>
    <dbReference type="NCBI Taxonomy" id="320372"/>
    <lineage>
        <taxon>Bacteria</taxon>
        <taxon>Pseudomonadati</taxon>
        <taxon>Pseudomonadota</taxon>
        <taxon>Betaproteobacteria</taxon>
        <taxon>Burkholderiales</taxon>
        <taxon>Burkholderiaceae</taxon>
        <taxon>Burkholderia</taxon>
        <taxon>pseudomallei group</taxon>
    </lineage>
</organism>
<gene>
    <name evidence="1" type="primary">atpC</name>
    <name type="ordered locus">BURPS1710b_0177</name>
</gene>
<comment type="function">
    <text evidence="1">Produces ATP from ADP in the presence of a proton gradient across the membrane.</text>
</comment>
<comment type="subunit">
    <text>F-type ATPases have 2 components, CF(1) - the catalytic core - and CF(0) - the membrane proton channel. CF(1) has five subunits: alpha(3), beta(3), gamma(1), delta(1), epsilon(1). CF(0) has three main subunits: a, b and c.</text>
</comment>
<comment type="subcellular location">
    <subcellularLocation>
        <location evidence="1">Cell inner membrane</location>
        <topology evidence="1">Peripheral membrane protein</topology>
    </subcellularLocation>
</comment>
<comment type="similarity">
    <text evidence="1">Belongs to the ATPase epsilon chain family.</text>
</comment>
<feature type="chain" id="PRO_0000265793" description="ATP synthase epsilon chain">
    <location>
        <begin position="1"/>
        <end position="141"/>
    </location>
</feature>
<accession>Q3JXW0</accession>
<reference key="1">
    <citation type="journal article" date="2010" name="Genome Biol. Evol.">
        <title>Continuing evolution of Burkholderia mallei through genome reduction and large-scale rearrangements.</title>
        <authorList>
            <person name="Losada L."/>
            <person name="Ronning C.M."/>
            <person name="DeShazer D."/>
            <person name="Woods D."/>
            <person name="Fedorova N."/>
            <person name="Kim H.S."/>
            <person name="Shabalina S.A."/>
            <person name="Pearson T.R."/>
            <person name="Brinkac L."/>
            <person name="Tan P."/>
            <person name="Nandi T."/>
            <person name="Crabtree J."/>
            <person name="Badger J."/>
            <person name="Beckstrom-Sternberg S."/>
            <person name="Saqib M."/>
            <person name="Schutzer S.E."/>
            <person name="Keim P."/>
            <person name="Nierman W.C."/>
        </authorList>
    </citation>
    <scope>NUCLEOTIDE SEQUENCE [LARGE SCALE GENOMIC DNA]</scope>
    <source>
        <strain>1710b</strain>
    </source>
</reference>
<proteinExistence type="inferred from homology"/>
<name>ATPE_BURP1</name>
<protein>
    <recommendedName>
        <fullName evidence="1">ATP synthase epsilon chain</fullName>
    </recommendedName>
    <alternativeName>
        <fullName evidence="1">ATP synthase F1 sector epsilon subunit</fullName>
    </alternativeName>
    <alternativeName>
        <fullName evidence="1">F-ATPase epsilon subunit</fullName>
    </alternativeName>
</protein>